<sequence length="1041" mass="117057">MFASTLRKTFVFLGLATYSAAALTTTSNSTHYTISNSRFSVAVAKSNGHVVDANLDGQDLLGPLSGNSGKGPYLDCSCTPEGFWTPGAEPALVNGTDSTGTPYVGVIMTDTYETTNQTLSQYLFLRGEETGLHAFSRVTYYNESDYFLRGLGELRTLFRPNTNLWTHFSGSEGNYGPMPLSSTEKITVQDATTYLGDTTDDPYVSQYSDYFTKYTLTESWRDHDVHGHFSNGSTSGDGNTYGAWLVHNTRETYYGGPLHADLVVDGIVYNYIVSGHYGAPNPNLTHGFDRTFGPQYYHFNSGGPGTTLEELRADAAQYASPEWNAEFYDSIAKHIPNYVPSTGRTTFRGKVNLPKGAKKPIIVLSENEQDFQLNVFKKDSLQYWAEIDGSGAFTIPRVVKGTYRVTIYADEIFGWFIKDNVKVIGSNAHTFTWKEETAGKEIWRIGVPDKSSGEFLHGYAPDTSKPLQPEQYRIYWGKYDYPSDFPEGVNYHVGKSDPAKDLNYIHWSFFPSQGNHLRNEPYYQNVNNWTITFDLTASQLRNTKTATFTVQLAGTRNANGNSKWNPDPAKYNNLPWTVNVNGIYEDTWEIPYWRSGSCGVRSGVQCQNTEHKFVFDAGKLRKGRNEFVLSLPFNATSVETALLPNSLYVQVVSMEAVSVSNDMRVLVQAFMPLVTWGTAVEKRVLLTGIVSVSAMAKEDYPMISRPCPRKGGTRRRKKERKKEGKKQGRTVLDALLQRSEQDSFWSRFCRSPIESVAQYVYGQGSTALRKKTTDNLVRVVCVSDTHNTKPNLPDGDILIHAGDLTESGTKEELEKQIYWLDSQPHRYKIVIAGNHETFLDRNYHSHHGNERVTMDWKSLIYLENTSAILDLGAGHQLKVFGSPYTPKHGNGAFQYPRTDTTTWEEIPKDTDLLVTHGPPKAHLDLGHLGCRVLRQALWEMESRPLLHVFGHIHGGYGKEVVCWDLCQRAYEAIMDGESRWWNLCVLFYCWILRLFFDWTADGRATVLVNAATVGGVRDLKRREAICVDIQAGSKRFLSGCT</sequence>
<protein>
    <recommendedName>
        <fullName>Probable rhamnogalacturonate lyase C</fullName>
        <ecNumber>4.2.2.23</ecNumber>
    </recommendedName>
</protein>
<accession>Q5B5P1</accession>
<accession>C8V4Z1</accession>
<gene>
    <name type="primary">rglC</name>
    <name type="ORF">AN4139</name>
</gene>
<name>RGLC_EMENI</name>
<organism>
    <name type="scientific">Emericella nidulans (strain FGSC A4 / ATCC 38163 / CBS 112.46 / NRRL 194 / M139)</name>
    <name type="common">Aspergillus nidulans</name>
    <dbReference type="NCBI Taxonomy" id="227321"/>
    <lineage>
        <taxon>Eukaryota</taxon>
        <taxon>Fungi</taxon>
        <taxon>Dikarya</taxon>
        <taxon>Ascomycota</taxon>
        <taxon>Pezizomycotina</taxon>
        <taxon>Eurotiomycetes</taxon>
        <taxon>Eurotiomycetidae</taxon>
        <taxon>Eurotiales</taxon>
        <taxon>Aspergillaceae</taxon>
        <taxon>Aspergillus</taxon>
        <taxon>Aspergillus subgen. Nidulantes</taxon>
    </lineage>
</organism>
<proteinExistence type="inferred from homology"/>
<reference key="1">
    <citation type="journal article" date="2005" name="Nature">
        <title>Sequencing of Aspergillus nidulans and comparative analysis with A. fumigatus and A. oryzae.</title>
        <authorList>
            <person name="Galagan J.E."/>
            <person name="Calvo S.E."/>
            <person name="Cuomo C."/>
            <person name="Ma L.-J."/>
            <person name="Wortman J.R."/>
            <person name="Batzoglou S."/>
            <person name="Lee S.-I."/>
            <person name="Bastuerkmen M."/>
            <person name="Spevak C.C."/>
            <person name="Clutterbuck J."/>
            <person name="Kapitonov V."/>
            <person name="Jurka J."/>
            <person name="Scazzocchio C."/>
            <person name="Farman M.L."/>
            <person name="Butler J."/>
            <person name="Purcell S."/>
            <person name="Harris S."/>
            <person name="Braus G.H."/>
            <person name="Draht O."/>
            <person name="Busch S."/>
            <person name="D'Enfert C."/>
            <person name="Bouchier C."/>
            <person name="Goldman G.H."/>
            <person name="Bell-Pedersen D."/>
            <person name="Griffiths-Jones S."/>
            <person name="Doonan J.H."/>
            <person name="Yu J."/>
            <person name="Vienken K."/>
            <person name="Pain A."/>
            <person name="Freitag M."/>
            <person name="Selker E.U."/>
            <person name="Archer D.B."/>
            <person name="Penalva M.A."/>
            <person name="Oakley B.R."/>
            <person name="Momany M."/>
            <person name="Tanaka T."/>
            <person name="Kumagai T."/>
            <person name="Asai K."/>
            <person name="Machida M."/>
            <person name="Nierman W.C."/>
            <person name="Denning D.W."/>
            <person name="Caddick M.X."/>
            <person name="Hynes M."/>
            <person name="Paoletti M."/>
            <person name="Fischer R."/>
            <person name="Miller B.L."/>
            <person name="Dyer P.S."/>
            <person name="Sachs M.S."/>
            <person name="Osmani S.A."/>
            <person name="Birren B.W."/>
        </authorList>
    </citation>
    <scope>NUCLEOTIDE SEQUENCE [LARGE SCALE GENOMIC DNA]</scope>
    <source>
        <strain>FGSC A4 / ATCC 38163 / CBS 112.46 / NRRL 194 / M139</strain>
    </source>
</reference>
<reference key="2">
    <citation type="journal article" date="2009" name="Fungal Genet. Biol.">
        <title>The 2008 update of the Aspergillus nidulans genome annotation: a community effort.</title>
        <authorList>
            <person name="Wortman J.R."/>
            <person name="Gilsenan J.M."/>
            <person name="Joardar V."/>
            <person name="Deegan J."/>
            <person name="Clutterbuck J."/>
            <person name="Andersen M.R."/>
            <person name="Archer D."/>
            <person name="Bencina M."/>
            <person name="Braus G."/>
            <person name="Coutinho P."/>
            <person name="von Dohren H."/>
            <person name="Doonan J."/>
            <person name="Driessen A.J."/>
            <person name="Durek P."/>
            <person name="Espeso E."/>
            <person name="Fekete E."/>
            <person name="Flipphi M."/>
            <person name="Estrada C.G."/>
            <person name="Geysens S."/>
            <person name="Goldman G."/>
            <person name="de Groot P.W."/>
            <person name="Hansen K."/>
            <person name="Harris S.D."/>
            <person name="Heinekamp T."/>
            <person name="Helmstaedt K."/>
            <person name="Henrissat B."/>
            <person name="Hofmann G."/>
            <person name="Homan T."/>
            <person name="Horio T."/>
            <person name="Horiuchi H."/>
            <person name="James S."/>
            <person name="Jones M."/>
            <person name="Karaffa L."/>
            <person name="Karanyi Z."/>
            <person name="Kato M."/>
            <person name="Keller N."/>
            <person name="Kelly D.E."/>
            <person name="Kiel J.A."/>
            <person name="Kim J.M."/>
            <person name="van der Klei I.J."/>
            <person name="Klis F.M."/>
            <person name="Kovalchuk A."/>
            <person name="Krasevec N."/>
            <person name="Kubicek C.P."/>
            <person name="Liu B."/>
            <person name="Maccabe A."/>
            <person name="Meyer V."/>
            <person name="Mirabito P."/>
            <person name="Miskei M."/>
            <person name="Mos M."/>
            <person name="Mullins J."/>
            <person name="Nelson D.R."/>
            <person name="Nielsen J."/>
            <person name="Oakley B.R."/>
            <person name="Osmani S.A."/>
            <person name="Pakula T."/>
            <person name="Paszewski A."/>
            <person name="Paulsen I."/>
            <person name="Pilsyk S."/>
            <person name="Pocsi I."/>
            <person name="Punt P.J."/>
            <person name="Ram A.F."/>
            <person name="Ren Q."/>
            <person name="Robellet X."/>
            <person name="Robson G."/>
            <person name="Seiboth B."/>
            <person name="van Solingen P."/>
            <person name="Specht T."/>
            <person name="Sun J."/>
            <person name="Taheri-Talesh N."/>
            <person name="Takeshita N."/>
            <person name="Ussery D."/>
            <person name="vanKuyk P.A."/>
            <person name="Visser H."/>
            <person name="van de Vondervoort P.J."/>
            <person name="de Vries R.P."/>
            <person name="Walton J."/>
            <person name="Xiang X."/>
            <person name="Xiong Y."/>
            <person name="Zeng A.P."/>
            <person name="Brandt B.W."/>
            <person name="Cornell M.J."/>
            <person name="van den Hondel C.A."/>
            <person name="Visser J."/>
            <person name="Oliver S.G."/>
            <person name="Turner G."/>
        </authorList>
    </citation>
    <scope>GENOME REANNOTATION</scope>
    <source>
        <strain>FGSC A4 / ATCC 38163 / CBS 112.46 / NRRL 194 / M139</strain>
    </source>
</reference>
<dbReference type="EC" id="4.2.2.23"/>
<dbReference type="EMBL" id="AACD01000067">
    <property type="protein sequence ID" value="EAA59400.1"/>
    <property type="molecule type" value="Genomic_DNA"/>
</dbReference>
<dbReference type="EMBL" id="BN001302">
    <property type="protein sequence ID" value="CBF74620.1"/>
    <property type="molecule type" value="Genomic_DNA"/>
</dbReference>
<dbReference type="RefSeq" id="XP_661743.1">
    <property type="nucleotide sequence ID" value="XM_656651.1"/>
</dbReference>
<dbReference type="SMR" id="Q5B5P1"/>
<dbReference type="CAZy" id="PL4">
    <property type="family name" value="Polysaccharide Lyase Family 4"/>
</dbReference>
<dbReference type="GlyCosmos" id="Q5B5P1">
    <property type="glycosylation" value="9 sites, No reported glycans"/>
</dbReference>
<dbReference type="DNASU" id="2873563"/>
<dbReference type="EnsemblFungi" id="CBF74620">
    <property type="protein sequence ID" value="CBF74620"/>
    <property type="gene ID" value="ANIA_04139"/>
</dbReference>
<dbReference type="KEGG" id="ani:ANIA_04139"/>
<dbReference type="eggNOG" id="KOG3947">
    <property type="taxonomic scope" value="Eukaryota"/>
</dbReference>
<dbReference type="HOGENOM" id="CLU_292567_0_0_1"/>
<dbReference type="InParanoid" id="Q5B5P1"/>
<dbReference type="OrthoDB" id="2130367at2759"/>
<dbReference type="Proteomes" id="UP000000560">
    <property type="component" value="Chromosome II"/>
</dbReference>
<dbReference type="GO" id="GO:0005576">
    <property type="term" value="C:extracellular region"/>
    <property type="evidence" value="ECO:0007669"/>
    <property type="project" value="UniProtKB-SubCell"/>
</dbReference>
<dbReference type="GO" id="GO:0030246">
    <property type="term" value="F:carbohydrate binding"/>
    <property type="evidence" value="ECO:0007669"/>
    <property type="project" value="InterPro"/>
</dbReference>
<dbReference type="GO" id="GO:0016787">
    <property type="term" value="F:hydrolase activity"/>
    <property type="evidence" value="ECO:0007669"/>
    <property type="project" value="InterPro"/>
</dbReference>
<dbReference type="GO" id="GO:0102210">
    <property type="term" value="F:rhamnogalacturonan endolyase activity"/>
    <property type="evidence" value="ECO:0007669"/>
    <property type="project" value="UniProtKB-EC"/>
</dbReference>
<dbReference type="GO" id="GO:0071555">
    <property type="term" value="P:cell wall organization"/>
    <property type="evidence" value="ECO:0007669"/>
    <property type="project" value="UniProtKB-KW"/>
</dbReference>
<dbReference type="GO" id="GO:0000272">
    <property type="term" value="P:polysaccharide catabolic process"/>
    <property type="evidence" value="ECO:0007669"/>
    <property type="project" value="UniProtKB-KW"/>
</dbReference>
<dbReference type="CDD" id="cd07379">
    <property type="entry name" value="MPP_239FB"/>
    <property type="match status" value="1"/>
</dbReference>
<dbReference type="CDD" id="cd10316">
    <property type="entry name" value="RGL4_M"/>
    <property type="match status" value="1"/>
</dbReference>
<dbReference type="CDD" id="cd10320">
    <property type="entry name" value="RGL4_N"/>
    <property type="match status" value="1"/>
</dbReference>
<dbReference type="Gene3D" id="2.70.98.10">
    <property type="match status" value="1"/>
</dbReference>
<dbReference type="Gene3D" id="3.60.21.10">
    <property type="match status" value="1"/>
</dbReference>
<dbReference type="Gene3D" id="2.60.40.1120">
    <property type="entry name" value="Carboxypeptidase-like, regulatory domain"/>
    <property type="match status" value="1"/>
</dbReference>
<dbReference type="Gene3D" id="2.60.120.260">
    <property type="entry name" value="Galactose-binding domain-like"/>
    <property type="match status" value="1"/>
</dbReference>
<dbReference type="InterPro" id="IPR004843">
    <property type="entry name" value="Calcineurin-like_PHP_ApaH"/>
</dbReference>
<dbReference type="InterPro" id="IPR013784">
    <property type="entry name" value="Carb-bd-like_fold"/>
</dbReference>
<dbReference type="InterPro" id="IPR011013">
    <property type="entry name" value="Gal_mutarotase_sf_dom"/>
</dbReference>
<dbReference type="InterPro" id="IPR008979">
    <property type="entry name" value="Galactose-bd-like_sf"/>
</dbReference>
<dbReference type="InterPro" id="IPR014718">
    <property type="entry name" value="GH-type_carb-bd"/>
</dbReference>
<dbReference type="InterPro" id="IPR029052">
    <property type="entry name" value="Metallo-depent_PP-like"/>
</dbReference>
<dbReference type="InterPro" id="IPR029413">
    <property type="entry name" value="RG-lyase_II"/>
</dbReference>
<dbReference type="InterPro" id="IPR029411">
    <property type="entry name" value="RG-lyase_III"/>
</dbReference>
<dbReference type="InterPro" id="IPR051693">
    <property type="entry name" value="UPF0046_metallophosphoest"/>
</dbReference>
<dbReference type="PANTHER" id="PTHR12905">
    <property type="entry name" value="METALLOPHOSPHOESTERASE"/>
    <property type="match status" value="1"/>
</dbReference>
<dbReference type="PANTHER" id="PTHR12905:SF28">
    <property type="entry name" value="RHAMNOGALACTURONATE LYASE C-RELATED"/>
    <property type="match status" value="1"/>
</dbReference>
<dbReference type="Pfam" id="PF14683">
    <property type="entry name" value="CBM-like"/>
    <property type="match status" value="1"/>
</dbReference>
<dbReference type="Pfam" id="PF14686">
    <property type="entry name" value="fn3_3"/>
    <property type="match status" value="1"/>
</dbReference>
<dbReference type="Pfam" id="PF00149">
    <property type="entry name" value="Metallophos"/>
    <property type="match status" value="1"/>
</dbReference>
<dbReference type="SUPFAM" id="SSF74650">
    <property type="entry name" value="Galactose mutarotase-like"/>
    <property type="match status" value="1"/>
</dbReference>
<dbReference type="SUPFAM" id="SSF49785">
    <property type="entry name" value="Galactose-binding domain-like"/>
    <property type="match status" value="1"/>
</dbReference>
<dbReference type="SUPFAM" id="SSF56300">
    <property type="entry name" value="Metallo-dependent phosphatases"/>
    <property type="match status" value="1"/>
</dbReference>
<dbReference type="SUPFAM" id="SSF49452">
    <property type="entry name" value="Starch-binding domain-like"/>
    <property type="match status" value="1"/>
</dbReference>
<feature type="signal peptide" evidence="2">
    <location>
        <begin position="1"/>
        <end position="21"/>
    </location>
</feature>
<feature type="chain" id="PRO_0000394381" description="Probable rhamnogalacturonate lyase C">
    <location>
        <begin position="22"/>
        <end position="1041"/>
    </location>
</feature>
<feature type="region of interest" description="Disordered" evidence="3">
    <location>
        <begin position="703"/>
        <end position="728"/>
    </location>
</feature>
<feature type="compositionally biased region" description="Basic residues" evidence="3">
    <location>
        <begin position="707"/>
        <end position="720"/>
    </location>
</feature>
<feature type="glycosylation site" description="N-linked (GlcNAc...) asparagine" evidence="2">
    <location>
        <position position="28"/>
    </location>
</feature>
<feature type="glycosylation site" description="N-linked (GlcNAc...) asparagine" evidence="2">
    <location>
        <position position="94"/>
    </location>
</feature>
<feature type="glycosylation site" description="N-linked (GlcNAc...) asparagine" evidence="2">
    <location>
        <position position="116"/>
    </location>
</feature>
<feature type="glycosylation site" description="N-linked (GlcNAc...) asparagine" evidence="2">
    <location>
        <position position="142"/>
    </location>
</feature>
<feature type="glycosylation site" description="N-linked (GlcNAc...) asparagine" evidence="2">
    <location>
        <position position="231"/>
    </location>
</feature>
<feature type="glycosylation site" description="N-linked (GlcNAc...) asparagine" evidence="2">
    <location>
        <position position="283"/>
    </location>
</feature>
<feature type="glycosylation site" description="N-linked (GlcNAc...) asparagine" evidence="2">
    <location>
        <position position="528"/>
    </location>
</feature>
<feature type="glycosylation site" description="N-linked (GlcNAc...) asparagine" evidence="2">
    <location>
        <position position="634"/>
    </location>
</feature>
<feature type="glycosylation site" description="N-linked (GlcNAc...) asparagine" evidence="2">
    <location>
        <position position="864"/>
    </location>
</feature>
<comment type="function">
    <text evidence="1">Pectinolytic enzymes consist of four classes of enzymes: pectin lyase, polygalacturonase, pectin methylesterase and rhamnogalacturonase. Degrades the rhamnogalacturonan I (RG-I) backbone of pectin (By similarity).</text>
</comment>
<comment type="catalytic activity">
    <reaction>
        <text>Endotype eliminative cleavage of L-alpha-rhamnopyranosyl-(1-&gt;4)-alpha-D-galactopyranosyluronic acid bonds of rhamnogalacturonan I domains in ramified hairy regions of pectin leaving L-rhamnopyranose at the reducing end and 4-deoxy-4,5-unsaturated D-galactopyranosyluronic acid at the non-reducing end.</text>
        <dbReference type="EC" id="4.2.2.23"/>
    </reaction>
</comment>
<comment type="subcellular location">
    <subcellularLocation>
        <location evidence="1">Secreted</location>
    </subcellularLocation>
</comment>
<comment type="similarity">
    <text evidence="4">Belongs to the polysaccharide lyase 4 family.</text>
</comment>
<evidence type="ECO:0000250" key="1"/>
<evidence type="ECO:0000255" key="2"/>
<evidence type="ECO:0000256" key="3">
    <source>
        <dbReference type="SAM" id="MobiDB-lite"/>
    </source>
</evidence>
<evidence type="ECO:0000305" key="4"/>
<keyword id="KW-0119">Carbohydrate metabolism</keyword>
<keyword id="KW-0961">Cell wall biogenesis/degradation</keyword>
<keyword id="KW-0325">Glycoprotein</keyword>
<keyword id="KW-0456">Lyase</keyword>
<keyword id="KW-0624">Polysaccharide degradation</keyword>
<keyword id="KW-1185">Reference proteome</keyword>
<keyword id="KW-0964">Secreted</keyword>
<keyword id="KW-0732">Signal</keyword>